<protein>
    <recommendedName>
        <fullName>Putative uncharacterized protein YdfE</fullName>
    </recommendedName>
    <alternativeName>
        <fullName>ORF6</fullName>
    </alternativeName>
</protein>
<keyword id="KW-1185">Reference proteome</keyword>
<comment type="caution">
    <text evidence="1">Could be the product of a pseudogene. The original protein is truncated by an IS2 element which is inserted after residue 255, giving an altered C-terminus.</text>
</comment>
<organism>
    <name type="scientific">Escherichia coli (strain K12)</name>
    <dbReference type="NCBI Taxonomy" id="83333"/>
    <lineage>
        <taxon>Bacteria</taxon>
        <taxon>Pseudomonadati</taxon>
        <taxon>Pseudomonadota</taxon>
        <taxon>Gammaproteobacteria</taxon>
        <taxon>Enterobacterales</taxon>
        <taxon>Enterobacteriaceae</taxon>
        <taxon>Escherichia</taxon>
    </lineage>
</organism>
<name>YDFE_ECOLI</name>
<gene>
    <name type="primary">ydfE</name>
    <name type="ordered locus">b1577</name>
    <name type="ordered locus">JW1568</name>
</gene>
<reference key="1">
    <citation type="journal article" date="1989" name="Mol. Microbiol.">
        <title>Genetic evidence that DicF, a second division inhibitor encoded by the Escherichia coli dicB operon, is probably RNA.</title>
        <authorList>
            <person name="Bouche F."/>
            <person name="Bouche J.-P."/>
        </authorList>
    </citation>
    <scope>NUCLEOTIDE SEQUENCE [GENOMIC DNA]</scope>
</reference>
<reference key="2">
    <citation type="journal article" date="1996" name="DNA Res.">
        <title>A 570-kb DNA sequence of the Escherichia coli K-12 genome corresponding to the 28.0-40.1 min region on the linkage map.</title>
        <authorList>
            <person name="Aiba H."/>
            <person name="Baba T."/>
            <person name="Fujita K."/>
            <person name="Hayashi K."/>
            <person name="Inada T."/>
            <person name="Isono K."/>
            <person name="Itoh T."/>
            <person name="Kasai H."/>
            <person name="Kashimoto K."/>
            <person name="Kimura S."/>
            <person name="Kitakawa M."/>
            <person name="Kitagawa M."/>
            <person name="Makino K."/>
            <person name="Miki T."/>
            <person name="Mizobuchi K."/>
            <person name="Mori H."/>
            <person name="Mori T."/>
            <person name="Motomura K."/>
            <person name="Nakade S."/>
            <person name="Nakamura Y."/>
            <person name="Nashimoto H."/>
            <person name="Nishio Y."/>
            <person name="Oshima T."/>
            <person name="Saito N."/>
            <person name="Sampei G."/>
            <person name="Seki Y."/>
            <person name="Sivasundaram S."/>
            <person name="Tagami H."/>
            <person name="Takeda J."/>
            <person name="Takemoto K."/>
            <person name="Takeuchi Y."/>
            <person name="Wada C."/>
            <person name="Yamamoto Y."/>
            <person name="Horiuchi T."/>
        </authorList>
    </citation>
    <scope>NUCLEOTIDE SEQUENCE [LARGE SCALE GENOMIC DNA]</scope>
    <source>
        <strain>K12 / W3110 / ATCC 27325 / DSM 5911</strain>
    </source>
</reference>
<reference key="3">
    <citation type="journal article" date="1997" name="Science">
        <title>The complete genome sequence of Escherichia coli K-12.</title>
        <authorList>
            <person name="Blattner F.R."/>
            <person name="Plunkett G. III"/>
            <person name="Bloch C.A."/>
            <person name="Perna N.T."/>
            <person name="Burland V."/>
            <person name="Riley M."/>
            <person name="Collado-Vides J."/>
            <person name="Glasner J.D."/>
            <person name="Rode C.K."/>
            <person name="Mayhew G.F."/>
            <person name="Gregor J."/>
            <person name="Davis N.W."/>
            <person name="Kirkpatrick H.A."/>
            <person name="Goeden M.A."/>
            <person name="Rose D.J."/>
            <person name="Mau B."/>
            <person name="Shao Y."/>
        </authorList>
    </citation>
    <scope>NUCLEOTIDE SEQUENCE [LARGE SCALE GENOMIC DNA]</scope>
    <source>
        <strain>K12 / MG1655 / ATCC 47076</strain>
    </source>
</reference>
<reference key="4">
    <citation type="journal article" date="2006" name="Mol. Syst. Biol.">
        <title>Highly accurate genome sequences of Escherichia coli K-12 strains MG1655 and W3110.</title>
        <authorList>
            <person name="Hayashi K."/>
            <person name="Morooka N."/>
            <person name="Yamamoto Y."/>
            <person name="Fujita K."/>
            <person name="Isono K."/>
            <person name="Choi S."/>
            <person name="Ohtsubo E."/>
            <person name="Baba T."/>
            <person name="Wanner B.L."/>
            <person name="Mori H."/>
            <person name="Horiuchi T."/>
        </authorList>
    </citation>
    <scope>NUCLEOTIDE SEQUENCE [LARGE SCALE GENOMIC DNA]</scope>
    <source>
        <strain>K12 / W3110 / ATCC 27325 / DSM 5911</strain>
    </source>
</reference>
<sequence>MSKVFICAAIPDELATREEGAVAVATAIEAGDERRARAKFHWQFLEHYPAAQDCAYKFIVCEDKPGIPRPALDSWDAEYMQENRWDEESASFVPVETESDPMNVTFDKLAPEVQNAVMVKFDTCENITVDMVISAQELLQEDMATFDGHIVEALMKMPEVNAMYPELKLHAIGWVKHKCIPGAKWPEIQAEMRIWKKRREGERKETGKYTSVVDLARARANQQYTENSTGKISPVIAAIHREYKQTWKTLDDELAYGRCFADRQNLMVCLRSMPNVFTGSCARMRCCLSENLLYRHRNGHIQAEWP</sequence>
<proteinExistence type="uncertain"/>
<dbReference type="EMBL" id="X07465">
    <property type="protein sequence ID" value="CAA30353.1"/>
    <property type="molecule type" value="Genomic_DNA"/>
</dbReference>
<dbReference type="EMBL" id="U00096">
    <property type="status" value="NOT_ANNOTATED_CDS"/>
    <property type="molecule type" value="Genomic_DNA"/>
</dbReference>
<dbReference type="EMBL" id="AP009048">
    <property type="protein sequence ID" value="BAA15281.2"/>
    <property type="molecule type" value="Genomic_DNA"/>
</dbReference>
<dbReference type="PIR" id="S03698">
    <property type="entry name" value="S03698"/>
</dbReference>
<dbReference type="BioGRID" id="4260249">
    <property type="interactions" value="16"/>
</dbReference>
<dbReference type="FunCoup" id="Q47138">
    <property type="interactions" value="179"/>
</dbReference>
<dbReference type="IntAct" id="Q47138">
    <property type="interactions" value="4"/>
</dbReference>
<dbReference type="jPOST" id="Q47138"/>
<dbReference type="KEGG" id="ecj:JW1568"/>
<dbReference type="EchoBASE" id="EB1281"/>
<dbReference type="eggNOG" id="COG0847">
    <property type="taxonomic scope" value="Bacteria"/>
</dbReference>
<dbReference type="HOGENOM" id="CLU_009076_0_1_6"/>
<dbReference type="InParanoid" id="Q47138"/>
<dbReference type="Proteomes" id="UP000000625">
    <property type="component" value="Chromosome"/>
</dbReference>
<evidence type="ECO:0000305" key="1"/>
<accession>Q47138</accession>
<accession>P77663</accession>
<feature type="chain" id="PRO_0000168956" description="Putative uncharacterized protein YdfE">
    <location>
        <begin position="1"/>
        <end position="306"/>
    </location>
</feature>